<sequence length="495" mass="55617">MTSRDGYQWTPETGLTQGVPSLGVISPPTNIEDTDKDGPWDVIVIGGGYCGLTATRDLTVAGFKTLLLEARDRIGGRSWSSNIDGYPYEMGGTWVHWHQSHVWREITRYKMHNALSPSFNFSRGVNHFQLRTNPTTSTYMTHEAEDELLRSALHKFTNVDGTNGRTVLPFPHDMFYVPEFRKYDEMSYSERIDQIRDELSLNERSSLEAFILLCSGGTLENSSFGEFLHWWAMSGYTYQGCMDCLISYKFKDGQSAFARRFWEEAAGTGRLGYVFGCPVRSVVNERDAARVTARDGREFAAKRLVCTIPLNVLSTIQFSPALSTERISAMQAGHVNMCTKVHAEVDNKDMRSWTGIAYPFNKLCYAIGDGTTPAGNTHLVCFGTDANHIQPDEDVRETLKAVGQLAPGTFGVKRLVFHNWVKDEFAKGAWFFSRPGMVSECLQGLREKHRGVVFANSDWALGWRSFIDGAIEEGTRAARVVLEELGTKREVKARL</sequence>
<proteinExistence type="evidence at protein level"/>
<protein>
    <recommendedName>
        <fullName>Monoamine oxidase N</fullName>
        <shortName>MAO-N</shortName>
        <ecNumber>1.4.3.4</ecNumber>
    </recommendedName>
</protein>
<keyword id="KW-0002">3D-structure</keyword>
<keyword id="KW-0903">Direct protein sequencing</keyword>
<keyword id="KW-0274">FAD</keyword>
<keyword id="KW-0285">Flavoprotein</keyword>
<keyword id="KW-0560">Oxidoreductase</keyword>
<keyword id="KW-0576">Peroxisome</keyword>
<reference key="1">
    <citation type="journal article" date="1995" name="Mol. Gen. Genet.">
        <title>Cloning, sequencing and heterologous expression of the monoamine oxidase gene from Aspergillus niger.</title>
        <authorList>
            <person name="Schilling B."/>
            <person name="Lerch K."/>
        </authorList>
    </citation>
    <scope>NUCLEOTIDE SEQUENCE [GENOMIC DNA]</scope>
    <scope>PROTEIN SEQUENCE OF 165-175</scope>
</reference>
<gene>
    <name type="primary">maoN</name>
</gene>
<evidence type="ECO:0000255" key="1"/>
<evidence type="ECO:0000256" key="2">
    <source>
        <dbReference type="SAM" id="MobiDB-lite"/>
    </source>
</evidence>
<evidence type="ECO:0000305" key="3"/>
<evidence type="ECO:0007829" key="4">
    <source>
        <dbReference type="PDB" id="2VVL"/>
    </source>
</evidence>
<evidence type="ECO:0007829" key="5">
    <source>
        <dbReference type="PDB" id="2VVM"/>
    </source>
</evidence>
<comment type="catalytic activity">
    <reaction>
        <text>a secondary aliphatic amine + O2 + H2O = a primary amine + an aldehyde + H2O2</text>
        <dbReference type="Rhea" id="RHEA:26414"/>
        <dbReference type="ChEBI" id="CHEBI:15377"/>
        <dbReference type="ChEBI" id="CHEBI:15379"/>
        <dbReference type="ChEBI" id="CHEBI:16240"/>
        <dbReference type="ChEBI" id="CHEBI:17478"/>
        <dbReference type="ChEBI" id="CHEBI:58855"/>
        <dbReference type="ChEBI" id="CHEBI:65296"/>
        <dbReference type="EC" id="1.4.3.4"/>
    </reaction>
</comment>
<comment type="cofactor">
    <cofactor>
        <name>FAD</name>
        <dbReference type="ChEBI" id="CHEBI:57692"/>
    </cofactor>
</comment>
<comment type="subcellular location">
    <subcellularLocation>
        <location evidence="3">Peroxisome</location>
    </subcellularLocation>
</comment>
<comment type="similarity">
    <text evidence="3">Belongs to the flavin monoamine oxidase family.</text>
</comment>
<accession>P46882</accession>
<organism>
    <name type="scientific">Aspergillus niger</name>
    <dbReference type="NCBI Taxonomy" id="5061"/>
    <lineage>
        <taxon>Eukaryota</taxon>
        <taxon>Fungi</taxon>
        <taxon>Dikarya</taxon>
        <taxon>Ascomycota</taxon>
        <taxon>Pezizomycotina</taxon>
        <taxon>Eurotiomycetes</taxon>
        <taxon>Eurotiomycetidae</taxon>
        <taxon>Eurotiales</taxon>
        <taxon>Aspergillaceae</taxon>
        <taxon>Aspergillus</taxon>
        <taxon>Aspergillus subgen. Circumdati</taxon>
    </lineage>
</organism>
<dbReference type="EC" id="1.4.3.4"/>
<dbReference type="EMBL" id="L38858">
    <property type="protein sequence ID" value="AAA98490.1"/>
    <property type="molecule type" value="Genomic_DNA"/>
</dbReference>
<dbReference type="PIR" id="S55273">
    <property type="entry name" value="S55273"/>
</dbReference>
<dbReference type="PDB" id="2VVL">
    <property type="method" value="X-ray"/>
    <property type="resolution" value="2.45 A"/>
    <property type="chains" value="A/B/C/D/E/F/G/H=1-495"/>
</dbReference>
<dbReference type="PDB" id="2VVM">
    <property type="method" value="X-ray"/>
    <property type="resolution" value="1.85 A"/>
    <property type="chains" value="A/B=1-495"/>
</dbReference>
<dbReference type="PDB" id="3ZDN">
    <property type="method" value="X-ray"/>
    <property type="resolution" value="2.55 A"/>
    <property type="chains" value="A/B/C/D=1-495"/>
</dbReference>
<dbReference type="PDBsum" id="2VVL"/>
<dbReference type="PDBsum" id="2VVM"/>
<dbReference type="PDBsum" id="3ZDN"/>
<dbReference type="SMR" id="P46882"/>
<dbReference type="PaxDb" id="5061-CADANGAP00009588"/>
<dbReference type="VEuPathDB" id="FungiDB:An12g03290"/>
<dbReference type="VEuPathDB" id="FungiDB:ASPNIDRAFT2_1084380"/>
<dbReference type="VEuPathDB" id="FungiDB:ATCC64974_41670"/>
<dbReference type="VEuPathDB" id="FungiDB:M747DRAFT_358493"/>
<dbReference type="eggNOG" id="KOG0029">
    <property type="taxonomic scope" value="Eukaryota"/>
</dbReference>
<dbReference type="BRENDA" id="1.4.3.4">
    <property type="organism ID" value="518"/>
</dbReference>
<dbReference type="EvolutionaryTrace" id="P46882"/>
<dbReference type="GO" id="GO:0005777">
    <property type="term" value="C:peroxisome"/>
    <property type="evidence" value="ECO:0007669"/>
    <property type="project" value="UniProtKB-SubCell"/>
</dbReference>
<dbReference type="GO" id="GO:0097621">
    <property type="term" value="F:monoamine oxidase activity"/>
    <property type="evidence" value="ECO:0007669"/>
    <property type="project" value="UniProtKB-EC"/>
</dbReference>
<dbReference type="Gene3D" id="3.90.660.10">
    <property type="match status" value="2"/>
</dbReference>
<dbReference type="Gene3D" id="3.50.50.60">
    <property type="entry name" value="FAD/NAD(P)-binding domain"/>
    <property type="match status" value="2"/>
</dbReference>
<dbReference type="InterPro" id="IPR002937">
    <property type="entry name" value="Amino_oxidase"/>
</dbReference>
<dbReference type="InterPro" id="IPR036188">
    <property type="entry name" value="FAD/NAD-bd_sf"/>
</dbReference>
<dbReference type="InterPro" id="IPR001613">
    <property type="entry name" value="Flavin_amine_oxidase"/>
</dbReference>
<dbReference type="InterPro" id="IPR050703">
    <property type="entry name" value="Flavin_MAO"/>
</dbReference>
<dbReference type="PANTHER" id="PTHR43563">
    <property type="entry name" value="AMINE OXIDASE"/>
    <property type="match status" value="1"/>
</dbReference>
<dbReference type="PANTHER" id="PTHR43563:SF1">
    <property type="entry name" value="AMINE OXIDASE [FLAVIN-CONTAINING] B"/>
    <property type="match status" value="1"/>
</dbReference>
<dbReference type="Pfam" id="PF01593">
    <property type="entry name" value="Amino_oxidase"/>
    <property type="match status" value="1"/>
</dbReference>
<dbReference type="PRINTS" id="PR00757">
    <property type="entry name" value="AMINEOXDASEF"/>
</dbReference>
<dbReference type="SUPFAM" id="SSF51905">
    <property type="entry name" value="FAD/NAD(P)-binding domain"/>
    <property type="match status" value="1"/>
</dbReference>
<feature type="chain" id="PRO_0000099865" description="Monoamine oxidase N">
    <location>
        <begin position="1"/>
        <end position="495"/>
    </location>
</feature>
<feature type="region of interest" description="Disordered" evidence="2">
    <location>
        <begin position="1"/>
        <end position="23"/>
    </location>
</feature>
<feature type="short sequence motif" description="Microbody targeting signal" evidence="1">
    <location>
        <begin position="493"/>
        <end position="495"/>
    </location>
</feature>
<feature type="compositionally biased region" description="Polar residues" evidence="2">
    <location>
        <begin position="1"/>
        <end position="19"/>
    </location>
</feature>
<feature type="strand" evidence="5">
    <location>
        <begin position="7"/>
        <end position="10"/>
    </location>
</feature>
<feature type="turn" evidence="5">
    <location>
        <begin position="11"/>
        <end position="13"/>
    </location>
</feature>
<feature type="strand" evidence="5">
    <location>
        <begin position="14"/>
        <end position="17"/>
    </location>
</feature>
<feature type="strand" evidence="5">
    <location>
        <begin position="26"/>
        <end position="29"/>
    </location>
</feature>
<feature type="strand" evidence="5">
    <location>
        <begin position="40"/>
        <end position="45"/>
    </location>
</feature>
<feature type="helix" evidence="5">
    <location>
        <begin position="49"/>
        <end position="60"/>
    </location>
</feature>
<feature type="strand" evidence="5">
    <location>
        <begin position="65"/>
        <end position="68"/>
    </location>
</feature>
<feature type="strand" evidence="5">
    <location>
        <begin position="70"/>
        <end position="75"/>
    </location>
</feature>
<feature type="strand" evidence="5">
    <location>
        <begin position="80"/>
        <end position="83"/>
    </location>
</feature>
<feature type="strand" evidence="5">
    <location>
        <begin position="86"/>
        <end position="89"/>
    </location>
</feature>
<feature type="helix" evidence="5">
    <location>
        <begin position="100"/>
        <end position="108"/>
    </location>
</feature>
<feature type="strand" evidence="5">
    <location>
        <begin position="115"/>
        <end position="118"/>
    </location>
</feature>
<feature type="strand" evidence="5">
    <location>
        <begin position="122"/>
        <end position="124"/>
    </location>
</feature>
<feature type="strand" evidence="5">
    <location>
        <begin position="127"/>
        <end position="133"/>
    </location>
</feature>
<feature type="strand" evidence="5">
    <location>
        <begin position="138"/>
        <end position="140"/>
    </location>
</feature>
<feature type="helix" evidence="5">
    <location>
        <begin position="142"/>
        <end position="157"/>
    </location>
</feature>
<feature type="strand" evidence="5">
    <location>
        <begin position="159"/>
        <end position="162"/>
    </location>
</feature>
<feature type="turn" evidence="5">
    <location>
        <begin position="163"/>
        <end position="167"/>
    </location>
</feature>
<feature type="helix" evidence="5">
    <location>
        <begin position="180"/>
        <end position="184"/>
    </location>
</feature>
<feature type="helix" evidence="5">
    <location>
        <begin position="188"/>
        <end position="195"/>
    </location>
</feature>
<feature type="helix" evidence="5">
    <location>
        <begin position="196"/>
        <end position="198"/>
    </location>
</feature>
<feature type="helix" evidence="5">
    <location>
        <begin position="201"/>
        <end position="215"/>
    </location>
</feature>
<feature type="turn" evidence="5">
    <location>
        <begin position="219"/>
        <end position="221"/>
    </location>
</feature>
<feature type="helix" evidence="5">
    <location>
        <begin position="224"/>
        <end position="233"/>
    </location>
</feature>
<feature type="helix" evidence="5">
    <location>
        <begin position="238"/>
        <end position="246"/>
    </location>
</feature>
<feature type="strand" evidence="5">
    <location>
        <begin position="247"/>
        <end position="250"/>
    </location>
</feature>
<feature type="helix" evidence="5">
    <location>
        <begin position="254"/>
        <end position="266"/>
    </location>
</feature>
<feature type="turn" evidence="5">
    <location>
        <begin position="267"/>
        <end position="269"/>
    </location>
</feature>
<feature type="strand" evidence="5">
    <location>
        <begin position="271"/>
        <end position="276"/>
    </location>
</feature>
<feature type="strand" evidence="5">
    <location>
        <begin position="279"/>
        <end position="284"/>
    </location>
</feature>
<feature type="strand" evidence="5">
    <location>
        <begin position="286"/>
        <end position="293"/>
    </location>
</feature>
<feature type="strand" evidence="5">
    <location>
        <begin position="298"/>
        <end position="306"/>
    </location>
</feature>
<feature type="helix" evidence="5">
    <location>
        <begin position="310"/>
        <end position="315"/>
    </location>
</feature>
<feature type="strand" evidence="5">
    <location>
        <begin position="316"/>
        <end position="320"/>
    </location>
</feature>
<feature type="helix" evidence="5">
    <location>
        <begin position="324"/>
        <end position="332"/>
    </location>
</feature>
<feature type="strand" evidence="5">
    <location>
        <begin position="339"/>
        <end position="346"/>
    </location>
</feature>
<feature type="helix" evidence="5">
    <location>
        <begin position="348"/>
        <end position="352"/>
    </location>
</feature>
<feature type="strand" evidence="5">
    <location>
        <begin position="353"/>
        <end position="357"/>
    </location>
</feature>
<feature type="strand" evidence="4">
    <location>
        <begin position="359"/>
        <end position="362"/>
    </location>
</feature>
<feature type="strand" evidence="5">
    <location>
        <begin position="365"/>
        <end position="371"/>
    </location>
</feature>
<feature type="strand" evidence="5">
    <location>
        <begin position="377"/>
        <end position="383"/>
    </location>
</feature>
<feature type="helix" evidence="4">
    <location>
        <begin position="385"/>
        <end position="387"/>
    </location>
</feature>
<feature type="turn" evidence="5">
    <location>
        <begin position="391"/>
        <end position="393"/>
    </location>
</feature>
<feature type="helix" evidence="5">
    <location>
        <begin position="395"/>
        <end position="403"/>
    </location>
</feature>
<feature type="strand" evidence="5">
    <location>
        <begin position="412"/>
        <end position="417"/>
    </location>
</feature>
<feature type="turn" evidence="5">
    <location>
        <begin position="420"/>
        <end position="422"/>
    </location>
</feature>
<feature type="turn" evidence="5">
    <location>
        <begin position="424"/>
        <end position="426"/>
    </location>
</feature>
<feature type="strand" evidence="5">
    <location>
        <begin position="427"/>
        <end position="430"/>
    </location>
</feature>
<feature type="helix" evidence="5">
    <location>
        <begin position="437"/>
        <end position="446"/>
    </location>
</feature>
<feature type="strand" evidence="5">
    <location>
        <begin position="452"/>
        <end position="454"/>
    </location>
</feature>
<feature type="helix" evidence="5">
    <location>
        <begin position="457"/>
        <end position="459"/>
    </location>
</feature>
<feature type="strand" evidence="5">
    <location>
        <begin position="461"/>
        <end position="463"/>
    </location>
</feature>
<feature type="helix" evidence="5">
    <location>
        <begin position="467"/>
        <end position="485"/>
    </location>
</feature>
<name>AOFN_ASPNG</name>